<dbReference type="EC" id="2.4.1.18" evidence="1"/>
<dbReference type="EMBL" id="AE015925">
    <property type="protein sequence ID" value="AAP05019.1"/>
    <property type="molecule type" value="Genomic_DNA"/>
</dbReference>
<dbReference type="RefSeq" id="WP_011006237.1">
    <property type="nucleotide sequence ID" value="NC_003361.3"/>
</dbReference>
<dbReference type="SMR" id="Q823Y5"/>
<dbReference type="STRING" id="227941.CCA_00268"/>
<dbReference type="CAZy" id="CBM48">
    <property type="family name" value="Carbohydrate-Binding Module Family 48"/>
</dbReference>
<dbReference type="CAZy" id="GH13">
    <property type="family name" value="Glycoside Hydrolase Family 13"/>
</dbReference>
<dbReference type="KEGG" id="cca:CCA_00268"/>
<dbReference type="eggNOG" id="COG0296">
    <property type="taxonomic scope" value="Bacteria"/>
</dbReference>
<dbReference type="HOGENOM" id="CLU_004245_3_2_0"/>
<dbReference type="OrthoDB" id="9800174at2"/>
<dbReference type="UniPathway" id="UPA00164"/>
<dbReference type="Proteomes" id="UP000002193">
    <property type="component" value="Chromosome"/>
</dbReference>
<dbReference type="GO" id="GO:0005829">
    <property type="term" value="C:cytosol"/>
    <property type="evidence" value="ECO:0007669"/>
    <property type="project" value="TreeGrafter"/>
</dbReference>
<dbReference type="GO" id="GO:0003844">
    <property type="term" value="F:1,4-alpha-glucan branching enzyme activity"/>
    <property type="evidence" value="ECO:0007669"/>
    <property type="project" value="UniProtKB-UniRule"/>
</dbReference>
<dbReference type="GO" id="GO:0043169">
    <property type="term" value="F:cation binding"/>
    <property type="evidence" value="ECO:0007669"/>
    <property type="project" value="InterPro"/>
</dbReference>
<dbReference type="GO" id="GO:0004553">
    <property type="term" value="F:hydrolase activity, hydrolyzing O-glycosyl compounds"/>
    <property type="evidence" value="ECO:0007669"/>
    <property type="project" value="InterPro"/>
</dbReference>
<dbReference type="GO" id="GO:0005978">
    <property type="term" value="P:glycogen biosynthetic process"/>
    <property type="evidence" value="ECO:0007669"/>
    <property type="project" value="UniProtKB-UniRule"/>
</dbReference>
<dbReference type="CDD" id="cd11322">
    <property type="entry name" value="AmyAc_Glg_BE"/>
    <property type="match status" value="1"/>
</dbReference>
<dbReference type="CDD" id="cd02855">
    <property type="entry name" value="E_set_GBE_prok_N"/>
    <property type="match status" value="1"/>
</dbReference>
<dbReference type="FunFam" id="2.60.40.10:FF:000169">
    <property type="entry name" value="1,4-alpha-glucan branching enzyme GlgB"/>
    <property type="match status" value="1"/>
</dbReference>
<dbReference type="FunFam" id="3.20.20.80:FF:000003">
    <property type="entry name" value="1,4-alpha-glucan branching enzyme GlgB"/>
    <property type="match status" value="1"/>
</dbReference>
<dbReference type="Gene3D" id="3.20.20.80">
    <property type="entry name" value="Glycosidases"/>
    <property type="match status" value="1"/>
</dbReference>
<dbReference type="Gene3D" id="2.60.40.1180">
    <property type="entry name" value="Golgi alpha-mannosidase II"/>
    <property type="match status" value="1"/>
</dbReference>
<dbReference type="Gene3D" id="2.60.40.10">
    <property type="entry name" value="Immunoglobulins"/>
    <property type="match status" value="2"/>
</dbReference>
<dbReference type="HAMAP" id="MF_00685">
    <property type="entry name" value="GlgB"/>
    <property type="match status" value="1"/>
</dbReference>
<dbReference type="InterPro" id="IPR006048">
    <property type="entry name" value="A-amylase/branching_C"/>
</dbReference>
<dbReference type="InterPro" id="IPR037439">
    <property type="entry name" value="Branching_enzy"/>
</dbReference>
<dbReference type="InterPro" id="IPR006407">
    <property type="entry name" value="GlgB"/>
</dbReference>
<dbReference type="InterPro" id="IPR054169">
    <property type="entry name" value="GlgB_N"/>
</dbReference>
<dbReference type="InterPro" id="IPR044143">
    <property type="entry name" value="GlgB_N_E_set_prok"/>
</dbReference>
<dbReference type="InterPro" id="IPR006047">
    <property type="entry name" value="Glyco_hydro_13_cat_dom"/>
</dbReference>
<dbReference type="InterPro" id="IPR004193">
    <property type="entry name" value="Glyco_hydro_13_N"/>
</dbReference>
<dbReference type="InterPro" id="IPR013780">
    <property type="entry name" value="Glyco_hydro_b"/>
</dbReference>
<dbReference type="InterPro" id="IPR017853">
    <property type="entry name" value="Glycoside_hydrolase_SF"/>
</dbReference>
<dbReference type="InterPro" id="IPR013783">
    <property type="entry name" value="Ig-like_fold"/>
</dbReference>
<dbReference type="InterPro" id="IPR014756">
    <property type="entry name" value="Ig_E-set"/>
</dbReference>
<dbReference type="NCBIfam" id="TIGR01515">
    <property type="entry name" value="branching_enzym"/>
    <property type="match status" value="1"/>
</dbReference>
<dbReference type="NCBIfam" id="NF003811">
    <property type="entry name" value="PRK05402.1"/>
    <property type="match status" value="1"/>
</dbReference>
<dbReference type="NCBIfam" id="NF008967">
    <property type="entry name" value="PRK12313.1"/>
    <property type="match status" value="1"/>
</dbReference>
<dbReference type="PANTHER" id="PTHR43651">
    <property type="entry name" value="1,4-ALPHA-GLUCAN-BRANCHING ENZYME"/>
    <property type="match status" value="1"/>
</dbReference>
<dbReference type="PANTHER" id="PTHR43651:SF3">
    <property type="entry name" value="1,4-ALPHA-GLUCAN-BRANCHING ENZYME"/>
    <property type="match status" value="1"/>
</dbReference>
<dbReference type="Pfam" id="PF00128">
    <property type="entry name" value="Alpha-amylase"/>
    <property type="match status" value="1"/>
</dbReference>
<dbReference type="Pfam" id="PF02806">
    <property type="entry name" value="Alpha-amylase_C"/>
    <property type="match status" value="1"/>
</dbReference>
<dbReference type="Pfam" id="PF02922">
    <property type="entry name" value="CBM_48"/>
    <property type="match status" value="1"/>
</dbReference>
<dbReference type="Pfam" id="PF22019">
    <property type="entry name" value="GlgB_N"/>
    <property type="match status" value="1"/>
</dbReference>
<dbReference type="PIRSF" id="PIRSF000463">
    <property type="entry name" value="GlgB"/>
    <property type="match status" value="1"/>
</dbReference>
<dbReference type="SMART" id="SM00642">
    <property type="entry name" value="Aamy"/>
    <property type="match status" value="1"/>
</dbReference>
<dbReference type="SUPFAM" id="SSF51445">
    <property type="entry name" value="(Trans)glycosidases"/>
    <property type="match status" value="1"/>
</dbReference>
<dbReference type="SUPFAM" id="SSF81296">
    <property type="entry name" value="E set domains"/>
    <property type="match status" value="2"/>
</dbReference>
<dbReference type="SUPFAM" id="SSF51011">
    <property type="entry name" value="Glycosyl hydrolase domain"/>
    <property type="match status" value="1"/>
</dbReference>
<reference key="1">
    <citation type="journal article" date="2003" name="Nucleic Acids Res.">
        <title>Genome sequence of Chlamydophila caviae (Chlamydia psittaci GPIC): examining the role of niche-specific genes in the evolution of the Chlamydiaceae.</title>
        <authorList>
            <person name="Read T.D."/>
            <person name="Myers G.S.A."/>
            <person name="Brunham R.C."/>
            <person name="Nelson W.C."/>
            <person name="Paulsen I.T."/>
            <person name="Heidelberg J.F."/>
            <person name="Holtzapple E.K."/>
            <person name="Khouri H.M."/>
            <person name="Federova N.B."/>
            <person name="Carty H.A."/>
            <person name="Umayam L.A."/>
            <person name="Haft D.H."/>
            <person name="Peterson J.D."/>
            <person name="Beanan M.J."/>
            <person name="White O."/>
            <person name="Salzberg S.L."/>
            <person name="Hsia R.-C."/>
            <person name="McClarty G."/>
            <person name="Rank R.G."/>
            <person name="Bavoil P.M."/>
            <person name="Fraser C.M."/>
        </authorList>
    </citation>
    <scope>NUCLEOTIDE SEQUENCE [LARGE SCALE GENOMIC DNA]</scope>
    <source>
        <strain>ATCC VR-813 / DSM 19441 / 03DC25 / GPIC</strain>
    </source>
</reference>
<sequence>MVERIINSEDISLLISGRQSNPHKFLGIISESSSQDRIILFRPGAHFVAIELQGNIAQATHHHSGIFSLVTPKGTLPHDYRIYHQNGLLAHDPYAFSPLWGEMDSFLFHQGTHYKIYERMGAIPCDVGGILGVLFVVWAPHAQRVSVVGDFNYWNGLVNPLRKVSDSGVWELFIPGLDEGTLYKWELVTASGEVLIKTDPYGKGFDIPPQVTSRVINSDRYTWHDQKWMENRKNTKDQPLAIYEVHVGSWQWDNGRPLGYRELAKRLAQYCKELHYTHVELLPITEHPLNESWGYQVTGYYAPTWRYGSFQDFQFFVDHLHCEGIGVILDWVPGHFPTDSFALASFDGEALYESVDHKDPLHPHWHTYTFDYRCSEVVNFLIGSALFWLDKMHIDGLRVDAVTSMLYLDYGRKAGEWSPNIYGGNENLDAIEFIKHFNSVVHREFPAVLTFAEESTDFPKVTESVDSGGLGFDYKWNLGWMHDTFRYIKVDPIFRSYHHNDLTFSLWYAFNERYLLPLSHDEVVHGKGSLLQKIPGDTWTKFAHMRLLLSYQICQPGKKLVFMGGEFAQWKEWSPDNSLDWHLLDNPYHASLHKCVAKMNALYCELPYFWKGDHKQESFLWVDFKDTKNNVISYYRFSGEDRSSALLCIHHFSSEYFPSYVLHCQGIKTCELLFNSDDISFGGSGKGNRLPILCVDHNIPWGIAIELPPLATLIFQVSF</sequence>
<proteinExistence type="inferred from homology"/>
<evidence type="ECO:0000255" key="1">
    <source>
        <dbReference type="HAMAP-Rule" id="MF_00685"/>
    </source>
</evidence>
<feature type="chain" id="PRO_0000188691" description="1,4-alpha-glucan branching enzyme GlgB">
    <location>
        <begin position="1"/>
        <end position="719"/>
    </location>
</feature>
<feature type="active site" description="Nucleophile" evidence="1">
    <location>
        <position position="400"/>
    </location>
</feature>
<feature type="active site" description="Proton donor" evidence="1">
    <location>
        <position position="453"/>
    </location>
</feature>
<accession>Q823Y5</accession>
<organism>
    <name type="scientific">Chlamydia caviae (strain ATCC VR-813 / DSM 19441 / 03DC25 / GPIC)</name>
    <name type="common">Chlamydophila caviae</name>
    <dbReference type="NCBI Taxonomy" id="227941"/>
    <lineage>
        <taxon>Bacteria</taxon>
        <taxon>Pseudomonadati</taxon>
        <taxon>Chlamydiota</taxon>
        <taxon>Chlamydiia</taxon>
        <taxon>Chlamydiales</taxon>
        <taxon>Chlamydiaceae</taxon>
        <taxon>Chlamydia/Chlamydophila group</taxon>
        <taxon>Chlamydia</taxon>
    </lineage>
</organism>
<gene>
    <name evidence="1" type="primary">glgB</name>
    <name type="ordered locus">CCA_00268</name>
</gene>
<protein>
    <recommendedName>
        <fullName evidence="1">1,4-alpha-glucan branching enzyme GlgB</fullName>
        <ecNumber evidence="1">2.4.1.18</ecNumber>
    </recommendedName>
    <alternativeName>
        <fullName evidence="1">1,4-alpha-D-glucan:1,4-alpha-D-glucan 6-glucosyl-transferase</fullName>
    </alternativeName>
    <alternativeName>
        <fullName evidence="1">Alpha-(1-&gt;4)-glucan branching enzyme</fullName>
    </alternativeName>
    <alternativeName>
        <fullName evidence="1">Glycogen branching enzyme</fullName>
        <shortName evidence="1">BE</shortName>
    </alternativeName>
</protein>
<comment type="function">
    <text evidence="1">Catalyzes the formation of the alpha-1,6-glucosidic linkages in glycogen by scission of a 1,4-alpha-linked oligosaccharide from growing alpha-1,4-glucan chains and the subsequent attachment of the oligosaccharide to the alpha-1,6 position.</text>
</comment>
<comment type="catalytic activity">
    <reaction evidence="1">
        <text>Transfers a segment of a (1-&gt;4)-alpha-D-glucan chain to a primary hydroxy group in a similar glucan chain.</text>
        <dbReference type="EC" id="2.4.1.18"/>
    </reaction>
</comment>
<comment type="pathway">
    <text evidence="1">Glycan biosynthesis; glycogen biosynthesis.</text>
</comment>
<comment type="subunit">
    <text evidence="1">Monomer.</text>
</comment>
<comment type="similarity">
    <text evidence="1">Belongs to the glycosyl hydrolase 13 family. GlgB subfamily.</text>
</comment>
<keyword id="KW-0119">Carbohydrate metabolism</keyword>
<keyword id="KW-0320">Glycogen biosynthesis</keyword>
<keyword id="KW-0321">Glycogen metabolism</keyword>
<keyword id="KW-0328">Glycosyltransferase</keyword>
<keyword id="KW-0808">Transferase</keyword>
<name>GLGB_CHLCV</name>